<proteinExistence type="inferred from homology"/>
<accession>A8XFH3</accession>
<keyword id="KW-0963">Cytoplasm</keyword>
<keyword id="KW-0396">Initiation factor</keyword>
<keyword id="KW-0648">Protein biosynthesis</keyword>
<keyword id="KW-1185">Reference proteome</keyword>
<gene>
    <name evidence="1 3" type="primary">eif-3.E</name>
    <name evidence="3" type="ORF">CBG12457</name>
</gene>
<reference key="1">
    <citation type="journal article" date="2003" name="PLoS Biol.">
        <title>The genome sequence of Caenorhabditis briggsae: a platform for comparative genomics.</title>
        <authorList>
            <person name="Stein L.D."/>
            <person name="Bao Z."/>
            <person name="Blasiar D."/>
            <person name="Blumenthal T."/>
            <person name="Brent M.R."/>
            <person name="Chen N."/>
            <person name="Chinwalla A."/>
            <person name="Clarke L."/>
            <person name="Clee C."/>
            <person name="Coghlan A."/>
            <person name="Coulson A."/>
            <person name="D'Eustachio P."/>
            <person name="Fitch D.H.A."/>
            <person name="Fulton L.A."/>
            <person name="Fulton R.E."/>
            <person name="Griffiths-Jones S."/>
            <person name="Harris T.W."/>
            <person name="Hillier L.W."/>
            <person name="Kamath R."/>
            <person name="Kuwabara P.E."/>
            <person name="Mardis E.R."/>
            <person name="Marra M.A."/>
            <person name="Miner T.L."/>
            <person name="Minx P."/>
            <person name="Mullikin J.C."/>
            <person name="Plumb R.W."/>
            <person name="Rogers J."/>
            <person name="Schein J.E."/>
            <person name="Sohrmann M."/>
            <person name="Spieth J."/>
            <person name="Stajich J.E."/>
            <person name="Wei C."/>
            <person name="Willey D."/>
            <person name="Wilson R.K."/>
            <person name="Durbin R.M."/>
            <person name="Waterston R.H."/>
        </authorList>
    </citation>
    <scope>NUCLEOTIDE SEQUENCE [LARGE SCALE GENOMIC DNA]</scope>
    <source>
        <strain>AF16</strain>
    </source>
</reference>
<sequence length="311" mass="36685">MFTVDMVDTLFKYSKFMYECGNYTVASVCLYYYRNLVNQADPNYLNALYGKLASEILLQEWEHARDDLLKLRAYIDANPFDTEWELVTQRAWLMHWALFVYYNYPKGRDEIIEMFLNQQPYLNAIQVLAPHLLRYLAVAVVTSKSRQKNSLKDLVKVIDIERHSYKDPVTDFLTCLYIKYDFDEAQEMLQKCEEVLSNDFFLTAVLGDFRESARLLIFEMFCRIHQCITIEMLARRLNMSQEEAERWIVDLIRTYRIEGAKIDSKLGQVVMGVKSVSIHEQVMENTKRLTLRAQQIALQLEKGRQDKVKAN</sequence>
<dbReference type="EMBL" id="HE600913">
    <property type="protein sequence ID" value="CAP31434.2"/>
    <property type="molecule type" value="Genomic_DNA"/>
</dbReference>
<dbReference type="SMR" id="A8XFH3"/>
<dbReference type="FunCoup" id="A8XFH3">
    <property type="interactions" value="2977"/>
</dbReference>
<dbReference type="STRING" id="6238.A8XFH3"/>
<dbReference type="WormBase" id="CBG12457">
    <property type="protein sequence ID" value="CBP45563"/>
    <property type="gene ID" value="WBGene00033404"/>
    <property type="gene designation" value="Cbr-eif-3.E"/>
</dbReference>
<dbReference type="eggNOG" id="KOG2758">
    <property type="taxonomic scope" value="Eukaryota"/>
</dbReference>
<dbReference type="HOGENOM" id="CLU_031132_0_1_1"/>
<dbReference type="InParanoid" id="A8XFH3"/>
<dbReference type="OMA" id="IMEPNRP"/>
<dbReference type="Proteomes" id="UP000008549">
    <property type="component" value="Unassembled WGS sequence"/>
</dbReference>
<dbReference type="GO" id="GO:0016282">
    <property type="term" value="C:eukaryotic 43S preinitiation complex"/>
    <property type="evidence" value="ECO:0007669"/>
    <property type="project" value="UniProtKB-UniRule"/>
</dbReference>
<dbReference type="GO" id="GO:0033290">
    <property type="term" value="C:eukaryotic 48S preinitiation complex"/>
    <property type="evidence" value="ECO:0007669"/>
    <property type="project" value="UniProtKB-UniRule"/>
</dbReference>
<dbReference type="GO" id="GO:0005852">
    <property type="term" value="C:eukaryotic translation initiation factor 3 complex"/>
    <property type="evidence" value="ECO:0000318"/>
    <property type="project" value="GO_Central"/>
</dbReference>
<dbReference type="GO" id="GO:0071540">
    <property type="term" value="C:eukaryotic translation initiation factor 3 complex, eIF3e"/>
    <property type="evidence" value="ECO:0007669"/>
    <property type="project" value="UniProtKB-UniRule"/>
</dbReference>
<dbReference type="GO" id="GO:0005634">
    <property type="term" value="C:nucleus"/>
    <property type="evidence" value="ECO:0000318"/>
    <property type="project" value="GO_Central"/>
</dbReference>
<dbReference type="GO" id="GO:0003743">
    <property type="term" value="F:translation initiation factor activity"/>
    <property type="evidence" value="ECO:0007669"/>
    <property type="project" value="UniProtKB-UniRule"/>
</dbReference>
<dbReference type="GO" id="GO:0001732">
    <property type="term" value="P:formation of cytoplasmic translation initiation complex"/>
    <property type="evidence" value="ECO:0007669"/>
    <property type="project" value="UniProtKB-UniRule"/>
</dbReference>
<dbReference type="GO" id="GO:0006413">
    <property type="term" value="P:translational initiation"/>
    <property type="evidence" value="ECO:0000318"/>
    <property type="project" value="GO_Central"/>
</dbReference>
<dbReference type="CDD" id="cd21378">
    <property type="entry name" value="eIF3E"/>
    <property type="match status" value="1"/>
</dbReference>
<dbReference type="HAMAP" id="MF_03004">
    <property type="entry name" value="eIF3e"/>
    <property type="match status" value="1"/>
</dbReference>
<dbReference type="InterPro" id="IPR016650">
    <property type="entry name" value="eIF3e"/>
</dbReference>
<dbReference type="InterPro" id="IPR000717">
    <property type="entry name" value="PCI_dom"/>
</dbReference>
<dbReference type="InterPro" id="IPR036390">
    <property type="entry name" value="WH_DNA-bd_sf"/>
</dbReference>
<dbReference type="PANTHER" id="PTHR10317">
    <property type="entry name" value="EUKARYOTIC TRANSLATION INITIATION FACTOR 3 SUBUNIT E"/>
    <property type="match status" value="1"/>
</dbReference>
<dbReference type="Pfam" id="PF01399">
    <property type="entry name" value="PCI"/>
    <property type="match status" value="1"/>
</dbReference>
<dbReference type="SMART" id="SM00088">
    <property type="entry name" value="PINT"/>
    <property type="match status" value="1"/>
</dbReference>
<dbReference type="SUPFAM" id="SSF46785">
    <property type="entry name" value="Winged helix' DNA-binding domain"/>
    <property type="match status" value="1"/>
</dbReference>
<dbReference type="PROSITE" id="PS50250">
    <property type="entry name" value="PCI"/>
    <property type="match status" value="1"/>
</dbReference>
<organism>
    <name type="scientific">Caenorhabditis briggsae</name>
    <dbReference type="NCBI Taxonomy" id="6238"/>
    <lineage>
        <taxon>Eukaryota</taxon>
        <taxon>Metazoa</taxon>
        <taxon>Ecdysozoa</taxon>
        <taxon>Nematoda</taxon>
        <taxon>Chromadorea</taxon>
        <taxon>Rhabditida</taxon>
        <taxon>Rhabditina</taxon>
        <taxon>Rhabditomorpha</taxon>
        <taxon>Rhabditoidea</taxon>
        <taxon>Rhabditidae</taxon>
        <taxon>Peloderinae</taxon>
        <taxon>Caenorhabditis</taxon>
    </lineage>
</organism>
<evidence type="ECO:0000255" key="1">
    <source>
        <dbReference type="HAMAP-Rule" id="MF_03004"/>
    </source>
</evidence>
<evidence type="ECO:0000255" key="2">
    <source>
        <dbReference type="PROSITE-ProRule" id="PRU01185"/>
    </source>
</evidence>
<evidence type="ECO:0000312" key="3">
    <source>
        <dbReference type="WormBase" id="CBG12457"/>
    </source>
</evidence>
<comment type="function">
    <text evidence="1">Component of the eukaryotic translation initiation factor 3 (eIF-3) complex, which is involved in protein synthesis of a specialized repertoire of mRNAs and, together with other initiation factors, stimulates binding of mRNA and methionyl-tRNAi to the 40S ribosome. The eIF-3 complex specifically targets and initiates translation of a subset of mRNAs involved in cell proliferation.</text>
</comment>
<comment type="subunit">
    <text evidence="1">Component of the eukaryotic translation initiation factor 3 (eIF-3) complex.</text>
</comment>
<comment type="subcellular location">
    <subcellularLocation>
        <location evidence="1">Cytoplasm</location>
    </subcellularLocation>
</comment>
<comment type="similarity">
    <text evidence="1">Belongs to the eIF-3 subunit E family.</text>
</comment>
<protein>
    <recommendedName>
        <fullName evidence="1">Eukaryotic translation initiation factor 3 subunit E</fullName>
        <shortName evidence="1">eIF3e</shortName>
    </recommendedName>
    <alternativeName>
        <fullName evidence="1">Eukaryotic translation initiation factor 3 subunit 6</fullName>
    </alternativeName>
</protein>
<name>EIF3E_CAEBR</name>
<feature type="chain" id="PRO_0000365977" description="Eukaryotic translation initiation factor 3 subunit E">
    <location>
        <begin position="1"/>
        <end position="311"/>
    </location>
</feature>
<feature type="domain" description="PCI" evidence="2">
    <location>
        <begin position="100"/>
        <end position="280"/>
    </location>
</feature>